<gene>
    <name evidence="2" type="primary">pyrB</name>
    <name type="ordered locus">c5345</name>
</gene>
<evidence type="ECO:0000250" key="1"/>
<evidence type="ECO:0000255" key="2">
    <source>
        <dbReference type="HAMAP-Rule" id="MF_00001"/>
    </source>
</evidence>
<evidence type="ECO:0000305" key="3"/>
<name>PYRB_ECOL6</name>
<protein>
    <recommendedName>
        <fullName evidence="2">Aspartate carbamoyltransferase catalytic subunit</fullName>
        <ecNumber evidence="2">2.1.3.2</ecNumber>
    </recommendedName>
    <alternativeName>
        <fullName evidence="2">Aspartate transcarbamylase</fullName>
        <shortName evidence="2">ATCase</shortName>
    </alternativeName>
</protein>
<comment type="function">
    <text evidence="2">Catalyzes the condensation of carbamoyl phosphate and aspartate to form carbamoyl aspartate and inorganic phosphate, the committed step in the de novo pyrimidine nucleotide biosynthesis pathway.</text>
</comment>
<comment type="catalytic activity">
    <reaction evidence="2">
        <text>carbamoyl phosphate + L-aspartate = N-carbamoyl-L-aspartate + phosphate + H(+)</text>
        <dbReference type="Rhea" id="RHEA:20013"/>
        <dbReference type="ChEBI" id="CHEBI:15378"/>
        <dbReference type="ChEBI" id="CHEBI:29991"/>
        <dbReference type="ChEBI" id="CHEBI:32814"/>
        <dbReference type="ChEBI" id="CHEBI:43474"/>
        <dbReference type="ChEBI" id="CHEBI:58228"/>
        <dbReference type="EC" id="2.1.3.2"/>
    </reaction>
</comment>
<comment type="pathway">
    <text evidence="2">Pyrimidine metabolism; UMP biosynthesis via de novo pathway; (S)-dihydroorotate from bicarbonate: step 2/3.</text>
</comment>
<comment type="subunit">
    <text evidence="2">Heterododecamer (2C3:3R2) of six catalytic PyrB chains organized as two trimers (C3), and six regulatory PyrI chains organized as three dimers (R2).</text>
</comment>
<comment type="similarity">
    <text evidence="2 3">Belongs to the aspartate/ornithine carbamoyltransferase superfamily. ATCase family.</text>
</comment>
<organism>
    <name type="scientific">Escherichia coli O6:H1 (strain CFT073 / ATCC 700928 / UPEC)</name>
    <dbReference type="NCBI Taxonomy" id="199310"/>
    <lineage>
        <taxon>Bacteria</taxon>
        <taxon>Pseudomonadati</taxon>
        <taxon>Pseudomonadota</taxon>
        <taxon>Gammaproteobacteria</taxon>
        <taxon>Enterobacterales</taxon>
        <taxon>Enterobacteriaceae</taxon>
        <taxon>Escherichia</taxon>
    </lineage>
</organism>
<reference key="1">
    <citation type="journal article" date="2002" name="Proc. Natl. Acad. Sci. U.S.A.">
        <title>Extensive mosaic structure revealed by the complete genome sequence of uropathogenic Escherichia coli.</title>
        <authorList>
            <person name="Welch R.A."/>
            <person name="Burland V."/>
            <person name="Plunkett G. III"/>
            <person name="Redford P."/>
            <person name="Roesch P."/>
            <person name="Rasko D."/>
            <person name="Buckles E.L."/>
            <person name="Liou S.-R."/>
            <person name="Boutin A."/>
            <person name="Hackett J."/>
            <person name="Stroud D."/>
            <person name="Mayhew G.F."/>
            <person name="Rose D.J."/>
            <person name="Zhou S."/>
            <person name="Schwartz D.C."/>
            <person name="Perna N.T."/>
            <person name="Mobley H.L.T."/>
            <person name="Donnenberg M.S."/>
            <person name="Blattner F.R."/>
        </authorList>
    </citation>
    <scope>NUCLEOTIDE SEQUENCE [LARGE SCALE GENOMIC DNA]</scope>
    <source>
        <strain>CFT073 / ATCC 700928 / UPEC</strain>
    </source>
</reference>
<proteinExistence type="inferred from homology"/>
<keyword id="KW-0665">Pyrimidine biosynthesis</keyword>
<keyword id="KW-1185">Reference proteome</keyword>
<keyword id="KW-0808">Transferase</keyword>
<dbReference type="EC" id="2.1.3.2" evidence="2"/>
<dbReference type="EMBL" id="AE014075">
    <property type="protein sequence ID" value="AAN83766.1"/>
    <property type="molecule type" value="Genomic_DNA"/>
</dbReference>
<dbReference type="RefSeq" id="WP_000013046.1">
    <property type="nucleotide sequence ID" value="NZ_CP051263.1"/>
</dbReference>
<dbReference type="SMR" id="P0A787"/>
<dbReference type="STRING" id="199310.c5345"/>
<dbReference type="GeneID" id="93777579"/>
<dbReference type="KEGG" id="ecc:c5345"/>
<dbReference type="eggNOG" id="COG0540">
    <property type="taxonomic scope" value="Bacteria"/>
</dbReference>
<dbReference type="HOGENOM" id="CLU_043846_1_2_6"/>
<dbReference type="BioCyc" id="ECOL199310:C5345-MONOMER"/>
<dbReference type="UniPathway" id="UPA00070">
    <property type="reaction ID" value="UER00116"/>
</dbReference>
<dbReference type="Proteomes" id="UP000001410">
    <property type="component" value="Chromosome"/>
</dbReference>
<dbReference type="GO" id="GO:0005829">
    <property type="term" value="C:cytosol"/>
    <property type="evidence" value="ECO:0007669"/>
    <property type="project" value="TreeGrafter"/>
</dbReference>
<dbReference type="GO" id="GO:0016597">
    <property type="term" value="F:amino acid binding"/>
    <property type="evidence" value="ECO:0007669"/>
    <property type="project" value="InterPro"/>
</dbReference>
<dbReference type="GO" id="GO:0004070">
    <property type="term" value="F:aspartate carbamoyltransferase activity"/>
    <property type="evidence" value="ECO:0007669"/>
    <property type="project" value="UniProtKB-UniRule"/>
</dbReference>
<dbReference type="GO" id="GO:0006207">
    <property type="term" value="P:'de novo' pyrimidine nucleobase biosynthetic process"/>
    <property type="evidence" value="ECO:0007669"/>
    <property type="project" value="InterPro"/>
</dbReference>
<dbReference type="GO" id="GO:0044205">
    <property type="term" value="P:'de novo' UMP biosynthetic process"/>
    <property type="evidence" value="ECO:0007669"/>
    <property type="project" value="UniProtKB-UniRule"/>
</dbReference>
<dbReference type="GO" id="GO:0006520">
    <property type="term" value="P:amino acid metabolic process"/>
    <property type="evidence" value="ECO:0007669"/>
    <property type="project" value="InterPro"/>
</dbReference>
<dbReference type="FunFam" id="3.40.50.1370:FF:000001">
    <property type="entry name" value="Aspartate carbamoyltransferase"/>
    <property type="match status" value="1"/>
</dbReference>
<dbReference type="FunFam" id="3.40.50.1370:FF:000002">
    <property type="entry name" value="Aspartate carbamoyltransferase 2"/>
    <property type="match status" value="1"/>
</dbReference>
<dbReference type="Gene3D" id="3.40.50.1370">
    <property type="entry name" value="Aspartate/ornithine carbamoyltransferase"/>
    <property type="match status" value="2"/>
</dbReference>
<dbReference type="HAMAP" id="MF_00001">
    <property type="entry name" value="Asp_carb_tr"/>
    <property type="match status" value="1"/>
</dbReference>
<dbReference type="InterPro" id="IPR006132">
    <property type="entry name" value="Asp/Orn_carbamoyltranf_P-bd"/>
</dbReference>
<dbReference type="InterPro" id="IPR006130">
    <property type="entry name" value="Asp/Orn_carbamoylTrfase"/>
</dbReference>
<dbReference type="InterPro" id="IPR036901">
    <property type="entry name" value="Asp/Orn_carbamoylTrfase_sf"/>
</dbReference>
<dbReference type="InterPro" id="IPR002082">
    <property type="entry name" value="Asp_carbamoyltransf"/>
</dbReference>
<dbReference type="InterPro" id="IPR006131">
    <property type="entry name" value="Asp_carbamoyltransf_Asp/Orn-bd"/>
</dbReference>
<dbReference type="NCBIfam" id="TIGR00670">
    <property type="entry name" value="asp_carb_tr"/>
    <property type="match status" value="1"/>
</dbReference>
<dbReference type="NCBIfam" id="NF002032">
    <property type="entry name" value="PRK00856.1"/>
    <property type="match status" value="1"/>
</dbReference>
<dbReference type="PANTHER" id="PTHR45753:SF6">
    <property type="entry name" value="ASPARTATE CARBAMOYLTRANSFERASE"/>
    <property type="match status" value="1"/>
</dbReference>
<dbReference type="PANTHER" id="PTHR45753">
    <property type="entry name" value="ORNITHINE CARBAMOYLTRANSFERASE, MITOCHONDRIAL"/>
    <property type="match status" value="1"/>
</dbReference>
<dbReference type="Pfam" id="PF00185">
    <property type="entry name" value="OTCace"/>
    <property type="match status" value="1"/>
</dbReference>
<dbReference type="Pfam" id="PF02729">
    <property type="entry name" value="OTCace_N"/>
    <property type="match status" value="1"/>
</dbReference>
<dbReference type="PRINTS" id="PR00100">
    <property type="entry name" value="AOTCASE"/>
</dbReference>
<dbReference type="PRINTS" id="PR00101">
    <property type="entry name" value="ATCASE"/>
</dbReference>
<dbReference type="SUPFAM" id="SSF53671">
    <property type="entry name" value="Aspartate/ornithine carbamoyltransferase"/>
    <property type="match status" value="1"/>
</dbReference>
<dbReference type="PROSITE" id="PS00097">
    <property type="entry name" value="CARBAMOYLTRANSFERASE"/>
    <property type="match status" value="1"/>
</dbReference>
<accession>P0A787</accession>
<accession>P00479</accession>
<accession>Q47555</accession>
<accession>Q47557</accession>
<sequence length="311" mass="34427">MANPLYQKHIISINDLSRDDLNLVLATAAKLKANPQPELLKHKVIASCFFEASTRTRLSFETSMHRLGASVVGFSDSANTSLGKKGETLADTISVISTYVDAIVMRHPQEGAARLATEFSGNVPVLNAGDGSNQHPTQTLLDLFTIQETQGRLDNLHVAMVGDLKYGRTVHSLTQALAKFDGNRFYFIAPDALAMPQYILDMLDEKGIAWSLHSSIEEVMAEVDILYMTRVQKERLDPSEYANVKAQFVLRASDLHNAKANMKVLHPLPRVDEIATDVDKTPHAWYFQQAGNGIFARQALLALVLNRDLVL</sequence>
<feature type="initiator methionine" description="Removed" evidence="1">
    <location>
        <position position="1"/>
    </location>
</feature>
<feature type="chain" id="PRO_0000113130" description="Aspartate carbamoyltransferase catalytic subunit">
    <location>
        <begin position="2"/>
        <end position="311"/>
    </location>
</feature>
<feature type="binding site" evidence="2">
    <location>
        <position position="55"/>
    </location>
    <ligand>
        <name>carbamoyl phosphate</name>
        <dbReference type="ChEBI" id="CHEBI:58228"/>
    </ligand>
</feature>
<feature type="binding site" evidence="2">
    <location>
        <position position="56"/>
    </location>
    <ligand>
        <name>carbamoyl phosphate</name>
        <dbReference type="ChEBI" id="CHEBI:58228"/>
    </ligand>
</feature>
<feature type="binding site" evidence="2">
    <location>
        <position position="85"/>
    </location>
    <ligand>
        <name>L-aspartate</name>
        <dbReference type="ChEBI" id="CHEBI:29991"/>
    </ligand>
</feature>
<feature type="binding site" evidence="2">
    <location>
        <position position="106"/>
    </location>
    <ligand>
        <name>carbamoyl phosphate</name>
        <dbReference type="ChEBI" id="CHEBI:58228"/>
    </ligand>
</feature>
<feature type="binding site" evidence="2">
    <location>
        <position position="135"/>
    </location>
    <ligand>
        <name>carbamoyl phosphate</name>
        <dbReference type="ChEBI" id="CHEBI:58228"/>
    </ligand>
</feature>
<feature type="binding site" evidence="2">
    <location>
        <position position="138"/>
    </location>
    <ligand>
        <name>carbamoyl phosphate</name>
        <dbReference type="ChEBI" id="CHEBI:58228"/>
    </ligand>
</feature>
<feature type="binding site" evidence="2">
    <location>
        <position position="168"/>
    </location>
    <ligand>
        <name>L-aspartate</name>
        <dbReference type="ChEBI" id="CHEBI:29991"/>
    </ligand>
</feature>
<feature type="binding site" evidence="2">
    <location>
        <position position="230"/>
    </location>
    <ligand>
        <name>L-aspartate</name>
        <dbReference type="ChEBI" id="CHEBI:29991"/>
    </ligand>
</feature>
<feature type="binding site" evidence="2">
    <location>
        <position position="268"/>
    </location>
    <ligand>
        <name>carbamoyl phosphate</name>
        <dbReference type="ChEBI" id="CHEBI:58228"/>
    </ligand>
</feature>
<feature type="binding site" evidence="2">
    <location>
        <position position="269"/>
    </location>
    <ligand>
        <name>carbamoyl phosphate</name>
        <dbReference type="ChEBI" id="CHEBI:58228"/>
    </ligand>
</feature>